<reference key="1">
    <citation type="journal article" date="2002" name="Nature">
        <title>The genome sequence of Schizosaccharomyces pombe.</title>
        <authorList>
            <person name="Wood V."/>
            <person name="Gwilliam R."/>
            <person name="Rajandream M.A."/>
            <person name="Lyne M.H."/>
            <person name="Lyne R."/>
            <person name="Stewart A."/>
            <person name="Sgouros J.G."/>
            <person name="Peat N."/>
            <person name="Hayles J."/>
            <person name="Baker S.G."/>
            <person name="Basham D."/>
            <person name="Bowman S."/>
            <person name="Brooks K."/>
            <person name="Brown D."/>
            <person name="Brown S."/>
            <person name="Chillingworth T."/>
            <person name="Churcher C.M."/>
            <person name="Collins M."/>
            <person name="Connor R."/>
            <person name="Cronin A."/>
            <person name="Davis P."/>
            <person name="Feltwell T."/>
            <person name="Fraser A."/>
            <person name="Gentles S."/>
            <person name="Goble A."/>
            <person name="Hamlin N."/>
            <person name="Harris D.E."/>
            <person name="Hidalgo J."/>
            <person name="Hodgson G."/>
            <person name="Holroyd S."/>
            <person name="Hornsby T."/>
            <person name="Howarth S."/>
            <person name="Huckle E.J."/>
            <person name="Hunt S."/>
            <person name="Jagels K."/>
            <person name="James K.D."/>
            <person name="Jones L."/>
            <person name="Jones M."/>
            <person name="Leather S."/>
            <person name="McDonald S."/>
            <person name="McLean J."/>
            <person name="Mooney P."/>
            <person name="Moule S."/>
            <person name="Mungall K.L."/>
            <person name="Murphy L.D."/>
            <person name="Niblett D."/>
            <person name="Odell C."/>
            <person name="Oliver K."/>
            <person name="O'Neil S."/>
            <person name="Pearson D."/>
            <person name="Quail M.A."/>
            <person name="Rabbinowitsch E."/>
            <person name="Rutherford K.M."/>
            <person name="Rutter S."/>
            <person name="Saunders D."/>
            <person name="Seeger K."/>
            <person name="Sharp S."/>
            <person name="Skelton J."/>
            <person name="Simmonds M.N."/>
            <person name="Squares R."/>
            <person name="Squares S."/>
            <person name="Stevens K."/>
            <person name="Taylor K."/>
            <person name="Taylor R.G."/>
            <person name="Tivey A."/>
            <person name="Walsh S.V."/>
            <person name="Warren T."/>
            <person name="Whitehead S."/>
            <person name="Woodward J.R."/>
            <person name="Volckaert G."/>
            <person name="Aert R."/>
            <person name="Robben J."/>
            <person name="Grymonprez B."/>
            <person name="Weltjens I."/>
            <person name="Vanstreels E."/>
            <person name="Rieger M."/>
            <person name="Schaefer M."/>
            <person name="Mueller-Auer S."/>
            <person name="Gabel C."/>
            <person name="Fuchs M."/>
            <person name="Duesterhoeft A."/>
            <person name="Fritzc C."/>
            <person name="Holzer E."/>
            <person name="Moestl D."/>
            <person name="Hilbert H."/>
            <person name="Borzym K."/>
            <person name="Langer I."/>
            <person name="Beck A."/>
            <person name="Lehrach H."/>
            <person name="Reinhardt R."/>
            <person name="Pohl T.M."/>
            <person name="Eger P."/>
            <person name="Zimmermann W."/>
            <person name="Wedler H."/>
            <person name="Wambutt R."/>
            <person name="Purnelle B."/>
            <person name="Goffeau A."/>
            <person name="Cadieu E."/>
            <person name="Dreano S."/>
            <person name="Gloux S."/>
            <person name="Lelaure V."/>
            <person name="Mottier S."/>
            <person name="Galibert F."/>
            <person name="Aves S.J."/>
            <person name="Xiang Z."/>
            <person name="Hunt C."/>
            <person name="Moore K."/>
            <person name="Hurst S.M."/>
            <person name="Lucas M."/>
            <person name="Rochet M."/>
            <person name="Gaillardin C."/>
            <person name="Tallada V.A."/>
            <person name="Garzon A."/>
            <person name="Thode G."/>
            <person name="Daga R.R."/>
            <person name="Cruzado L."/>
            <person name="Jimenez J."/>
            <person name="Sanchez M."/>
            <person name="del Rey F."/>
            <person name="Benito J."/>
            <person name="Dominguez A."/>
            <person name="Revuelta J.L."/>
            <person name="Moreno S."/>
            <person name="Armstrong J."/>
            <person name="Forsburg S.L."/>
            <person name="Cerutti L."/>
            <person name="Lowe T."/>
            <person name="McCombie W.R."/>
            <person name="Paulsen I."/>
            <person name="Potashkin J."/>
            <person name="Shpakovski G.V."/>
            <person name="Ussery D."/>
            <person name="Barrell B.G."/>
            <person name="Nurse P."/>
        </authorList>
    </citation>
    <scope>NUCLEOTIDE SEQUENCE [LARGE SCALE GENOMIC DNA]</scope>
    <source>
        <strain>972 / ATCC 24843</strain>
    </source>
</reference>
<reference key="2">
    <citation type="journal article" date="2000" name="Genes Cells">
        <title>Large-scale screening of intracellular protein localization in living fission yeast cells by the use of a GFP-fusion genomic DNA library.</title>
        <authorList>
            <person name="Ding D.-Q."/>
            <person name="Tomita Y."/>
            <person name="Yamamoto A."/>
            <person name="Chikashige Y."/>
            <person name="Haraguchi T."/>
            <person name="Hiraoka Y."/>
        </authorList>
    </citation>
    <scope>NUCLEOTIDE SEQUENCE [LARGE SCALE GENOMIC DNA] OF 201-413</scope>
    <scope>SUBCELLULAR LOCATION</scope>
    <source>
        <strain>ATCC 38364 / 968</strain>
    </source>
</reference>
<accession>O94245</accession>
<accession>Q9USC4</accession>
<name>YJ14_SCHPO</name>
<keyword id="KW-0963">Cytoplasm</keyword>
<keyword id="KW-1185">Reference proteome</keyword>
<dbReference type="EMBL" id="CU329672">
    <property type="protein sequence ID" value="CAA20861.1"/>
    <property type="molecule type" value="Genomic_DNA"/>
</dbReference>
<dbReference type="EMBL" id="AB027873">
    <property type="protein sequence ID" value="BAA87177.1"/>
    <property type="molecule type" value="Genomic_DNA"/>
</dbReference>
<dbReference type="PIR" id="T41577">
    <property type="entry name" value="T41577"/>
</dbReference>
<dbReference type="RefSeq" id="NP_588366.1">
    <property type="nucleotide sequence ID" value="NM_001023357.2"/>
</dbReference>
<dbReference type="BioGRID" id="275451">
    <property type="interactions" value="3"/>
</dbReference>
<dbReference type="STRING" id="284812.O94245"/>
<dbReference type="PaxDb" id="4896-SPCC737.04.1"/>
<dbReference type="EnsemblFungi" id="SPCC737.04.1">
    <property type="protein sequence ID" value="SPCC737.04.1:pep"/>
    <property type="gene ID" value="SPCC737.04"/>
</dbReference>
<dbReference type="KEGG" id="spo:2538872"/>
<dbReference type="PomBase" id="SPCC737.04"/>
<dbReference type="VEuPathDB" id="FungiDB:SPCC737.04"/>
<dbReference type="HOGENOM" id="CLU_687277_0_0_1"/>
<dbReference type="InParanoid" id="O94245"/>
<dbReference type="OMA" id="FATGNFT"/>
<dbReference type="PhylomeDB" id="O94245"/>
<dbReference type="PRO" id="PR:O94245"/>
<dbReference type="Proteomes" id="UP000002485">
    <property type="component" value="Chromosome III"/>
</dbReference>
<dbReference type="GO" id="GO:0005737">
    <property type="term" value="C:cytoplasm"/>
    <property type="evidence" value="ECO:0007669"/>
    <property type="project" value="UniProtKB-SubCell"/>
</dbReference>
<dbReference type="InterPro" id="IPR013903">
    <property type="entry name" value="Meiotic_expression"/>
</dbReference>
<dbReference type="Pfam" id="PF08594">
    <property type="entry name" value="UPF0300"/>
    <property type="match status" value="1"/>
</dbReference>
<organism>
    <name type="scientific">Schizosaccharomyces pombe (strain 972 / ATCC 24843)</name>
    <name type="common">Fission yeast</name>
    <dbReference type="NCBI Taxonomy" id="284812"/>
    <lineage>
        <taxon>Eukaryota</taxon>
        <taxon>Fungi</taxon>
        <taxon>Dikarya</taxon>
        <taxon>Ascomycota</taxon>
        <taxon>Taphrinomycotina</taxon>
        <taxon>Schizosaccharomycetes</taxon>
        <taxon>Schizosaccharomycetales</taxon>
        <taxon>Schizosaccharomycetaceae</taxon>
        <taxon>Schizosaccharomyces</taxon>
    </lineage>
</organism>
<proteinExistence type="inferred from homology"/>
<protein>
    <recommendedName>
        <fullName>UPF0300 protein C737.04</fullName>
    </recommendedName>
</protein>
<sequence length="421" mass="48796">MSISNQSGLDILREVDDEGQENSFLRKTTRKIQQFFKSDPGYQSRKAEYNSPAKATGDVNINVTSQDWLSKLDRNLSIENLTGKSLGIVVVSGRNKGLIKNPFLGGLVDIVMRRQDKLYLKSVEQVSSEYSPMQEQVYEFKVDMPLVQKRLGAFLKKNRVDGLSLSMHFSTGNYSLPVLIRHVLLYDYYTDDMKDSLWRAMIIYVSRQVTSNKYTKFHLWCVQKRIGNIRMYLVRPGDVYSFQGQTSWAAICNKSYMCNIQLEQSPEVSVKSSLPKYSNEPIFQSKTISQEEVGWLLFMLSIGNHARAFPIQNYLANTVMETVLPVELRCPFLSRSVDCEIFQKNTKRRVMEKWRQEFKKDLNVCEELEFKNVKKSGYMQPLFDLTMPLGCFDSLETKEMFYLRHNIAGFQADLTPYPMRI</sequence>
<evidence type="ECO:0000269" key="1">
    <source>
    </source>
</evidence>
<evidence type="ECO:0000305" key="2"/>
<feature type="chain" id="PRO_0000118860" description="UPF0300 protein C737.04">
    <location>
        <begin position="1"/>
        <end position="421"/>
    </location>
</feature>
<comment type="subcellular location">
    <subcellularLocation>
        <location evidence="1">Cytoplasm</location>
    </subcellularLocation>
</comment>
<comment type="similarity">
    <text evidence="2">Belongs to the UPF0300 family.</text>
</comment>
<gene>
    <name type="ORF">SPCC737.04</name>
</gene>